<sequence length="62" mass="7424">MPRMVRCSFCGREIEPGTGIMYVKNDGSILWFCSRKCYKNYLLLRRDPRKLKWTLKYGSQTK</sequence>
<gene>
    <name evidence="1" type="primary">rpl24e</name>
    <name type="ordered locus">Smar_0827</name>
</gene>
<evidence type="ECO:0000255" key="1">
    <source>
        <dbReference type="HAMAP-Rule" id="MF_00773"/>
    </source>
</evidence>
<evidence type="ECO:0000305" key="2"/>
<reference key="1">
    <citation type="journal article" date="2009" name="BMC Genomics">
        <title>The complete genome sequence of Staphylothermus marinus reveals differences in sulfur metabolism among heterotrophic Crenarchaeota.</title>
        <authorList>
            <person name="Anderson I.J."/>
            <person name="Dharmarajan L."/>
            <person name="Rodriguez J."/>
            <person name="Hooper S."/>
            <person name="Porat I."/>
            <person name="Ulrich L.E."/>
            <person name="Elkins J.G."/>
            <person name="Mavromatis K."/>
            <person name="Sun H."/>
            <person name="Land M."/>
            <person name="Lapidus A."/>
            <person name="Lucas S."/>
            <person name="Barry K."/>
            <person name="Huber H."/>
            <person name="Zhulin I.B."/>
            <person name="Whitman W.B."/>
            <person name="Mukhopadhyay B."/>
            <person name="Woese C."/>
            <person name="Bristow J."/>
            <person name="Kyrpides N."/>
        </authorList>
    </citation>
    <scope>NUCLEOTIDE SEQUENCE [LARGE SCALE GENOMIC DNA]</scope>
    <source>
        <strain>ATCC 43588 / DSM 3639 / JCM 9404 / F1</strain>
    </source>
</reference>
<reference key="2">
    <citation type="journal article" date="2009" name="Stand. Genomic Sci.">
        <title>Complete genome sequence of Staphylothermus marinus Stetter and Fiala 1986 type strain F1.</title>
        <authorList>
            <person name="Anderson I.J."/>
            <person name="Sun H."/>
            <person name="Lapidus A."/>
            <person name="Copeland A."/>
            <person name="Glavina Del Rio T."/>
            <person name="Tice H."/>
            <person name="Dalin E."/>
            <person name="Lucas S."/>
            <person name="Barry K."/>
            <person name="Land M."/>
            <person name="Richardson P."/>
            <person name="Huber H."/>
            <person name="Kyrpides N.C."/>
        </authorList>
    </citation>
    <scope>NUCLEOTIDE SEQUENCE [LARGE SCALE GENOMIC DNA]</scope>
    <source>
        <strain>ATCC 43588 / DSM 3639 / JCM 9404 / F1</strain>
    </source>
</reference>
<accession>A3DMR8</accession>
<protein>
    <recommendedName>
        <fullName evidence="1">Large ribosomal subunit protein eL24</fullName>
    </recommendedName>
    <alternativeName>
        <fullName evidence="2">50S ribosomal protein L24e</fullName>
    </alternativeName>
</protein>
<comment type="function">
    <text evidence="1">Binds to the 23S rRNA.</text>
</comment>
<comment type="cofactor">
    <cofactor evidence="1">
        <name>Zn(2+)</name>
        <dbReference type="ChEBI" id="CHEBI:29105"/>
    </cofactor>
    <text evidence="1">Binds 1 zinc ion per subunit.</text>
</comment>
<comment type="subunit">
    <text evidence="1">Part of the 50S ribosomal subunit. Forms a cluster with proteins L3 and L14.</text>
</comment>
<comment type="similarity">
    <text evidence="1">Belongs to the eukaryotic ribosomal protein eL24 family.</text>
</comment>
<organism>
    <name type="scientific">Staphylothermus marinus (strain ATCC 43588 / DSM 3639 / JCM 9404 / F1)</name>
    <dbReference type="NCBI Taxonomy" id="399550"/>
    <lineage>
        <taxon>Archaea</taxon>
        <taxon>Thermoproteota</taxon>
        <taxon>Thermoprotei</taxon>
        <taxon>Desulfurococcales</taxon>
        <taxon>Desulfurococcaceae</taxon>
        <taxon>Staphylothermus</taxon>
    </lineage>
</organism>
<keyword id="KW-0479">Metal-binding</keyword>
<keyword id="KW-1185">Reference proteome</keyword>
<keyword id="KW-0687">Ribonucleoprotein</keyword>
<keyword id="KW-0689">Ribosomal protein</keyword>
<keyword id="KW-0694">RNA-binding</keyword>
<keyword id="KW-0699">rRNA-binding</keyword>
<keyword id="KW-0862">Zinc</keyword>
<keyword id="KW-0863">Zinc-finger</keyword>
<feature type="chain" id="PRO_1000017361" description="Large ribosomal subunit protein eL24">
    <location>
        <begin position="1"/>
        <end position="62"/>
    </location>
</feature>
<feature type="zinc finger region" description="C4-type" evidence="1">
    <location>
        <begin position="7"/>
        <end position="37"/>
    </location>
</feature>
<feature type="binding site" evidence="1">
    <location>
        <position position="7"/>
    </location>
    <ligand>
        <name>Zn(2+)</name>
        <dbReference type="ChEBI" id="CHEBI:29105"/>
    </ligand>
</feature>
<feature type="binding site" evidence="1">
    <location>
        <position position="10"/>
    </location>
    <ligand>
        <name>Zn(2+)</name>
        <dbReference type="ChEBI" id="CHEBI:29105"/>
    </ligand>
</feature>
<feature type="binding site" evidence="1">
    <location>
        <position position="33"/>
    </location>
    <ligand>
        <name>Zn(2+)</name>
        <dbReference type="ChEBI" id="CHEBI:29105"/>
    </ligand>
</feature>
<feature type="binding site" evidence="1">
    <location>
        <position position="37"/>
    </location>
    <ligand>
        <name>Zn(2+)</name>
        <dbReference type="ChEBI" id="CHEBI:29105"/>
    </ligand>
</feature>
<proteinExistence type="inferred from homology"/>
<name>RL24E_STAMF</name>
<dbReference type="EMBL" id="CP000575">
    <property type="protein sequence ID" value="ABN69928.1"/>
    <property type="molecule type" value="Genomic_DNA"/>
</dbReference>
<dbReference type="RefSeq" id="WP_011839119.1">
    <property type="nucleotide sequence ID" value="NC_009033.1"/>
</dbReference>
<dbReference type="SMR" id="A3DMR8"/>
<dbReference type="STRING" id="399550.Smar_0827"/>
<dbReference type="GeneID" id="4908061"/>
<dbReference type="KEGG" id="smr:Smar_0827"/>
<dbReference type="eggNOG" id="arCOG01950">
    <property type="taxonomic scope" value="Archaea"/>
</dbReference>
<dbReference type="HOGENOM" id="CLU_190191_0_0_2"/>
<dbReference type="OrthoDB" id="55506at2157"/>
<dbReference type="Proteomes" id="UP000000254">
    <property type="component" value="Chromosome"/>
</dbReference>
<dbReference type="GO" id="GO:1990904">
    <property type="term" value="C:ribonucleoprotein complex"/>
    <property type="evidence" value="ECO:0007669"/>
    <property type="project" value="UniProtKB-KW"/>
</dbReference>
<dbReference type="GO" id="GO:0005840">
    <property type="term" value="C:ribosome"/>
    <property type="evidence" value="ECO:0007669"/>
    <property type="project" value="UniProtKB-KW"/>
</dbReference>
<dbReference type="GO" id="GO:0019843">
    <property type="term" value="F:rRNA binding"/>
    <property type="evidence" value="ECO:0007669"/>
    <property type="project" value="UniProtKB-UniRule"/>
</dbReference>
<dbReference type="GO" id="GO:0003735">
    <property type="term" value="F:structural constituent of ribosome"/>
    <property type="evidence" value="ECO:0007669"/>
    <property type="project" value="InterPro"/>
</dbReference>
<dbReference type="GO" id="GO:0008270">
    <property type="term" value="F:zinc ion binding"/>
    <property type="evidence" value="ECO:0007669"/>
    <property type="project" value="UniProtKB-UniRule"/>
</dbReference>
<dbReference type="GO" id="GO:0006412">
    <property type="term" value="P:translation"/>
    <property type="evidence" value="ECO:0007669"/>
    <property type="project" value="UniProtKB-UniRule"/>
</dbReference>
<dbReference type="CDD" id="cd00472">
    <property type="entry name" value="Ribosomal_L24e_L24"/>
    <property type="match status" value="1"/>
</dbReference>
<dbReference type="FunFam" id="2.30.170.20:FF:000001">
    <property type="entry name" value="probable ribosome biogenesis protein RLP24"/>
    <property type="match status" value="1"/>
</dbReference>
<dbReference type="Gene3D" id="2.30.170.20">
    <property type="entry name" value="Ribosomal protein L24e"/>
    <property type="match status" value="1"/>
</dbReference>
<dbReference type="HAMAP" id="MF_00773">
    <property type="entry name" value="Ribosomal_eL24"/>
    <property type="match status" value="1"/>
</dbReference>
<dbReference type="InterPro" id="IPR038630">
    <property type="entry name" value="L24e/L24_sf"/>
</dbReference>
<dbReference type="InterPro" id="IPR056366">
    <property type="entry name" value="Ribosomal_eL24"/>
</dbReference>
<dbReference type="InterPro" id="IPR055345">
    <property type="entry name" value="Ribosomal_eL24-rel_arc"/>
</dbReference>
<dbReference type="InterPro" id="IPR000988">
    <property type="entry name" value="Ribosomal_eL24-rel_N"/>
</dbReference>
<dbReference type="InterPro" id="IPR023442">
    <property type="entry name" value="Ribosomal_eL24_CS"/>
</dbReference>
<dbReference type="InterPro" id="IPR011017">
    <property type="entry name" value="TRASH_dom"/>
</dbReference>
<dbReference type="NCBIfam" id="NF034186">
    <property type="entry name" value="PRK14891.1-1"/>
    <property type="match status" value="1"/>
</dbReference>
<dbReference type="PANTHER" id="PTHR10792">
    <property type="entry name" value="60S RIBOSOMAL PROTEIN L24"/>
    <property type="match status" value="1"/>
</dbReference>
<dbReference type="PANTHER" id="PTHR10792:SF1">
    <property type="entry name" value="RIBOSOMAL PROTEIN L24"/>
    <property type="match status" value="1"/>
</dbReference>
<dbReference type="Pfam" id="PF01246">
    <property type="entry name" value="Ribosomal_L24e"/>
    <property type="match status" value="1"/>
</dbReference>
<dbReference type="SMART" id="SM00746">
    <property type="entry name" value="TRASH"/>
    <property type="match status" value="1"/>
</dbReference>
<dbReference type="SUPFAM" id="SSF57716">
    <property type="entry name" value="Glucocorticoid receptor-like (DNA-binding domain)"/>
    <property type="match status" value="1"/>
</dbReference>
<dbReference type="PROSITE" id="PS01073">
    <property type="entry name" value="RIBOSOMAL_L24E"/>
    <property type="match status" value="1"/>
</dbReference>